<protein>
    <recommendedName>
        <fullName evidence="1">Phosphoenolpyruvate carboxykinase [GTP]</fullName>
        <shortName evidence="1">PEP carboxykinase</shortName>
        <shortName evidence="1">PEPCK</shortName>
        <ecNumber evidence="1">4.1.1.32</ecNumber>
    </recommendedName>
</protein>
<name>PCKG_SULTO</name>
<sequence>MYIMRSSFNFLNLLVSDKMIKKIEILNNSYVEEFIEKTAELCNPSSIYLVTSEEDKEYIRRKAIETKEELPLKTLGHTIHFDHPLDQARARDDTFILTDDKIPFVNTKKREDGIREVLSLLKDSMKGREMYVGFYSLGPKNSIFQHLAIQISDSPYVIHSENILYRLDFDDFKGNKQFLKFVHSKGELDIKKRRIMIDLKEDTVYSVNTTYAGNSVGLKKLALRLTIAKAVKEGWLSEHMAIIGFEGDKGTHYFTASFPSGSGKTSTSMMGKLISDDLAFIREINGVARAVNPEIGVFGIIQGINSKDDPIIWEVLHKPNEVIFSNVLMTEDGYVYWEGSDDKRPERGINYEGFWSNDMNKPASHPNARFTVPLTAFKNLDENYDNPDGVEIEGIIFGVRDYDTLIPVVEAFSCSHGIVTIGASMESARTSAVIGKGDEYEFNPMAILDFMPIHLGEYLGNYLEFCKKLKKVPRIFGFNYFLKEGNRFLNSKEDKRVWIKWAVKRVEGSVDVIYTPIGLVPYYEDLKTLFREMLNKEYTIEDYEKQFTLKLDKYLEKNERILKLYKEILAPKEVIAELEQQKERILKYIDKYGKRISPLDLR</sequence>
<feature type="chain" id="PRO_0000103623" description="Phosphoenolpyruvate carboxykinase [GTP]">
    <location>
        <begin position="1"/>
        <end position="602"/>
    </location>
</feature>
<feature type="active site" evidence="1">
    <location>
        <position position="262"/>
    </location>
</feature>
<feature type="binding site" evidence="1">
    <location>
        <position position="89"/>
    </location>
    <ligand>
        <name>substrate</name>
    </ligand>
</feature>
<feature type="binding site" evidence="1">
    <location>
        <begin position="211"/>
        <end position="213"/>
    </location>
    <ligand>
        <name>substrate</name>
    </ligand>
</feature>
<feature type="binding site" evidence="1">
    <location>
        <position position="220"/>
    </location>
    <ligand>
        <name>Mn(2+)</name>
        <dbReference type="ChEBI" id="CHEBI:29035"/>
    </ligand>
</feature>
<feature type="binding site" evidence="1">
    <location>
        <position position="239"/>
    </location>
    <ligand>
        <name>Mn(2+)</name>
        <dbReference type="ChEBI" id="CHEBI:29035"/>
    </ligand>
</feature>
<feature type="binding site" evidence="1">
    <location>
        <position position="260"/>
    </location>
    <ligand>
        <name>substrate</name>
    </ligand>
</feature>
<feature type="binding site" evidence="1">
    <location>
        <begin position="261"/>
        <end position="266"/>
    </location>
    <ligand>
        <name>GTP</name>
        <dbReference type="ChEBI" id="CHEBI:37565"/>
    </ligand>
</feature>
<feature type="binding site" evidence="1">
    <location>
        <position position="277"/>
    </location>
    <ligand>
        <name>Mn(2+)</name>
        <dbReference type="ChEBI" id="CHEBI:29035"/>
    </ligand>
</feature>
<feature type="binding site" evidence="1">
    <location>
        <begin position="367"/>
        <end position="369"/>
    </location>
    <ligand>
        <name>substrate</name>
    </ligand>
</feature>
<feature type="binding site" evidence="1">
    <location>
        <position position="369"/>
    </location>
    <ligand>
        <name>GTP</name>
        <dbReference type="ChEBI" id="CHEBI:37565"/>
    </ligand>
</feature>
<feature type="binding site" evidence="1">
    <location>
        <position position="400"/>
    </location>
    <ligand>
        <name>GTP</name>
        <dbReference type="ChEBI" id="CHEBI:37565"/>
    </ligand>
</feature>
<gene>
    <name evidence="1" type="primary">pckG</name>
    <name type="ordered locus">STK_10580</name>
</gene>
<comment type="function">
    <text evidence="1">Catalyzes the conversion of oxaloacetate (OAA) to phosphoenolpyruvate (PEP), the rate-limiting step in the metabolic pathway that produces glucose from lactate and other precursors derived from the citric acid cycle.</text>
</comment>
<comment type="catalytic activity">
    <reaction evidence="1">
        <text>oxaloacetate + GTP = phosphoenolpyruvate + GDP + CO2</text>
        <dbReference type="Rhea" id="RHEA:10388"/>
        <dbReference type="ChEBI" id="CHEBI:16452"/>
        <dbReference type="ChEBI" id="CHEBI:16526"/>
        <dbReference type="ChEBI" id="CHEBI:37565"/>
        <dbReference type="ChEBI" id="CHEBI:58189"/>
        <dbReference type="ChEBI" id="CHEBI:58702"/>
        <dbReference type="EC" id="4.1.1.32"/>
    </reaction>
</comment>
<comment type="cofactor">
    <cofactor evidence="1">
        <name>Mn(2+)</name>
        <dbReference type="ChEBI" id="CHEBI:29035"/>
    </cofactor>
    <text evidence="1">Binds 1 Mn(2+) ion per subunit.</text>
</comment>
<comment type="pathway">
    <text evidence="1">Carbohydrate biosynthesis; gluconeogenesis.</text>
</comment>
<comment type="subcellular location">
    <subcellularLocation>
        <location evidence="1">Cytoplasm</location>
    </subcellularLocation>
</comment>
<comment type="similarity">
    <text evidence="1">Belongs to the phosphoenolpyruvate carboxykinase [GTP] family.</text>
</comment>
<evidence type="ECO:0000255" key="1">
    <source>
        <dbReference type="HAMAP-Rule" id="MF_00452"/>
    </source>
</evidence>
<organism>
    <name type="scientific">Sulfurisphaera tokodaii (strain DSM 16993 / JCM 10545 / NBRC 100140 / 7)</name>
    <name type="common">Sulfolobus tokodaii</name>
    <dbReference type="NCBI Taxonomy" id="273063"/>
    <lineage>
        <taxon>Archaea</taxon>
        <taxon>Thermoproteota</taxon>
        <taxon>Thermoprotei</taxon>
        <taxon>Sulfolobales</taxon>
        <taxon>Sulfolobaceae</taxon>
        <taxon>Sulfurisphaera</taxon>
    </lineage>
</organism>
<dbReference type="EC" id="4.1.1.32" evidence="1"/>
<dbReference type="EMBL" id="BA000023">
    <property type="protein sequence ID" value="BAB66087.1"/>
    <property type="molecule type" value="Genomic_DNA"/>
</dbReference>
<dbReference type="SMR" id="Q972S7"/>
<dbReference type="STRING" id="273063.STK_10580"/>
<dbReference type="KEGG" id="sto:STK_10580"/>
<dbReference type="PATRIC" id="fig|273063.9.peg.1191"/>
<dbReference type="eggNOG" id="arCOG05865">
    <property type="taxonomic scope" value="Archaea"/>
</dbReference>
<dbReference type="UniPathway" id="UPA00138"/>
<dbReference type="Proteomes" id="UP000001015">
    <property type="component" value="Chromosome"/>
</dbReference>
<dbReference type="GO" id="GO:0005829">
    <property type="term" value="C:cytosol"/>
    <property type="evidence" value="ECO:0007669"/>
    <property type="project" value="TreeGrafter"/>
</dbReference>
<dbReference type="GO" id="GO:0005525">
    <property type="term" value="F:GTP binding"/>
    <property type="evidence" value="ECO:0007669"/>
    <property type="project" value="UniProtKB-UniRule"/>
</dbReference>
<dbReference type="GO" id="GO:0030145">
    <property type="term" value="F:manganese ion binding"/>
    <property type="evidence" value="ECO:0007669"/>
    <property type="project" value="UniProtKB-UniRule"/>
</dbReference>
<dbReference type="GO" id="GO:0004613">
    <property type="term" value="F:phosphoenolpyruvate carboxykinase (GTP) activity"/>
    <property type="evidence" value="ECO:0007669"/>
    <property type="project" value="UniProtKB-UniRule"/>
</dbReference>
<dbReference type="GO" id="GO:0071333">
    <property type="term" value="P:cellular response to glucose stimulus"/>
    <property type="evidence" value="ECO:0007669"/>
    <property type="project" value="TreeGrafter"/>
</dbReference>
<dbReference type="GO" id="GO:0006094">
    <property type="term" value="P:gluconeogenesis"/>
    <property type="evidence" value="ECO:0007669"/>
    <property type="project" value="UniProtKB-UniRule"/>
</dbReference>
<dbReference type="GO" id="GO:0046327">
    <property type="term" value="P:glycerol biosynthetic process from pyruvate"/>
    <property type="evidence" value="ECO:0007669"/>
    <property type="project" value="TreeGrafter"/>
</dbReference>
<dbReference type="GO" id="GO:0006107">
    <property type="term" value="P:oxaloacetate metabolic process"/>
    <property type="evidence" value="ECO:0007669"/>
    <property type="project" value="TreeGrafter"/>
</dbReference>
<dbReference type="GO" id="GO:0019543">
    <property type="term" value="P:propionate catabolic process"/>
    <property type="evidence" value="ECO:0007669"/>
    <property type="project" value="TreeGrafter"/>
</dbReference>
<dbReference type="GO" id="GO:0033993">
    <property type="term" value="P:response to lipid"/>
    <property type="evidence" value="ECO:0007669"/>
    <property type="project" value="TreeGrafter"/>
</dbReference>
<dbReference type="GO" id="GO:0042594">
    <property type="term" value="P:response to starvation"/>
    <property type="evidence" value="ECO:0007669"/>
    <property type="project" value="TreeGrafter"/>
</dbReference>
<dbReference type="Gene3D" id="3.90.228.20">
    <property type="match status" value="1"/>
</dbReference>
<dbReference type="Gene3D" id="3.40.449.10">
    <property type="entry name" value="Phosphoenolpyruvate Carboxykinase, domain 1"/>
    <property type="match status" value="1"/>
</dbReference>
<dbReference type="Gene3D" id="2.170.8.10">
    <property type="entry name" value="Phosphoenolpyruvate Carboxykinase, domain 2"/>
    <property type="match status" value="1"/>
</dbReference>
<dbReference type="HAMAP" id="MF_00452">
    <property type="entry name" value="PEPCK_GTP"/>
    <property type="match status" value="1"/>
</dbReference>
<dbReference type="InterPro" id="IPR013035">
    <property type="entry name" value="PEP_carboxykinase_C"/>
</dbReference>
<dbReference type="InterPro" id="IPR008209">
    <property type="entry name" value="PEP_carboxykinase_GTP"/>
</dbReference>
<dbReference type="InterPro" id="IPR035077">
    <property type="entry name" value="PEP_carboxykinase_GTP_C"/>
</dbReference>
<dbReference type="InterPro" id="IPR035078">
    <property type="entry name" value="PEP_carboxykinase_GTP_N"/>
</dbReference>
<dbReference type="InterPro" id="IPR008210">
    <property type="entry name" value="PEP_carboxykinase_N"/>
</dbReference>
<dbReference type="NCBIfam" id="NF003253">
    <property type="entry name" value="PRK04210.1"/>
    <property type="match status" value="1"/>
</dbReference>
<dbReference type="PANTHER" id="PTHR11561">
    <property type="entry name" value="PHOSPHOENOLPYRUVATE CARBOXYKINASE"/>
    <property type="match status" value="1"/>
</dbReference>
<dbReference type="PANTHER" id="PTHR11561:SF0">
    <property type="entry name" value="PHOSPHOENOLPYRUVATE CARBOXYKINASE [GTP]-RELATED"/>
    <property type="match status" value="1"/>
</dbReference>
<dbReference type="Pfam" id="PF00821">
    <property type="entry name" value="PEPCK_GTP"/>
    <property type="match status" value="1"/>
</dbReference>
<dbReference type="Pfam" id="PF17297">
    <property type="entry name" value="PEPCK_N"/>
    <property type="match status" value="1"/>
</dbReference>
<dbReference type="PIRSF" id="PIRSF001348">
    <property type="entry name" value="PEP_carboxykinase_GTP"/>
    <property type="match status" value="1"/>
</dbReference>
<dbReference type="SUPFAM" id="SSF68923">
    <property type="entry name" value="PEP carboxykinase N-terminal domain"/>
    <property type="match status" value="1"/>
</dbReference>
<dbReference type="SUPFAM" id="SSF53795">
    <property type="entry name" value="PEP carboxykinase-like"/>
    <property type="match status" value="1"/>
</dbReference>
<keyword id="KW-0963">Cytoplasm</keyword>
<keyword id="KW-0210">Decarboxylase</keyword>
<keyword id="KW-0312">Gluconeogenesis</keyword>
<keyword id="KW-0342">GTP-binding</keyword>
<keyword id="KW-0456">Lyase</keyword>
<keyword id="KW-0464">Manganese</keyword>
<keyword id="KW-0479">Metal-binding</keyword>
<keyword id="KW-0547">Nucleotide-binding</keyword>
<keyword id="KW-1185">Reference proteome</keyword>
<accession>Q972S7</accession>
<proteinExistence type="inferred from homology"/>
<reference key="1">
    <citation type="journal article" date="2001" name="DNA Res.">
        <title>Complete genome sequence of an aerobic thermoacidophilic Crenarchaeon, Sulfolobus tokodaii strain7.</title>
        <authorList>
            <person name="Kawarabayasi Y."/>
            <person name="Hino Y."/>
            <person name="Horikawa H."/>
            <person name="Jin-no K."/>
            <person name="Takahashi M."/>
            <person name="Sekine M."/>
            <person name="Baba S."/>
            <person name="Ankai A."/>
            <person name="Kosugi H."/>
            <person name="Hosoyama A."/>
            <person name="Fukui S."/>
            <person name="Nagai Y."/>
            <person name="Nishijima K."/>
            <person name="Otsuka R."/>
            <person name="Nakazawa H."/>
            <person name="Takamiya M."/>
            <person name="Kato Y."/>
            <person name="Yoshizawa T."/>
            <person name="Tanaka T."/>
            <person name="Kudoh Y."/>
            <person name="Yamazaki J."/>
            <person name="Kushida N."/>
            <person name="Oguchi A."/>
            <person name="Aoki K."/>
            <person name="Masuda S."/>
            <person name="Yanagii M."/>
            <person name="Nishimura M."/>
            <person name="Yamagishi A."/>
            <person name="Oshima T."/>
            <person name="Kikuchi H."/>
        </authorList>
    </citation>
    <scope>NUCLEOTIDE SEQUENCE [LARGE SCALE GENOMIC DNA]</scope>
    <source>
        <strain>DSM 16993 / JCM 10545 / NBRC 100140 / 7</strain>
    </source>
</reference>